<name>LRK21_ARATH</name>
<proteinExistence type="evidence at transcript level"/>
<comment type="catalytic activity">
    <reaction>
        <text>L-seryl-[protein] + ATP = O-phospho-L-seryl-[protein] + ADP + H(+)</text>
        <dbReference type="Rhea" id="RHEA:17989"/>
        <dbReference type="Rhea" id="RHEA-COMP:9863"/>
        <dbReference type="Rhea" id="RHEA-COMP:11604"/>
        <dbReference type="ChEBI" id="CHEBI:15378"/>
        <dbReference type="ChEBI" id="CHEBI:29999"/>
        <dbReference type="ChEBI" id="CHEBI:30616"/>
        <dbReference type="ChEBI" id="CHEBI:83421"/>
        <dbReference type="ChEBI" id="CHEBI:456216"/>
        <dbReference type="EC" id="2.7.11.1"/>
    </reaction>
</comment>
<comment type="catalytic activity">
    <reaction>
        <text>L-threonyl-[protein] + ATP = O-phospho-L-threonyl-[protein] + ADP + H(+)</text>
        <dbReference type="Rhea" id="RHEA:46608"/>
        <dbReference type="Rhea" id="RHEA-COMP:11060"/>
        <dbReference type="Rhea" id="RHEA-COMP:11605"/>
        <dbReference type="ChEBI" id="CHEBI:15378"/>
        <dbReference type="ChEBI" id="CHEBI:30013"/>
        <dbReference type="ChEBI" id="CHEBI:30616"/>
        <dbReference type="ChEBI" id="CHEBI:61977"/>
        <dbReference type="ChEBI" id="CHEBI:456216"/>
        <dbReference type="EC" id="2.7.11.1"/>
    </reaction>
</comment>
<comment type="subcellular location">
    <subcellularLocation>
        <location evidence="1">Cell membrane</location>
        <topology evidence="1">Single-pass type I membrane protein</topology>
    </subcellularLocation>
</comment>
<comment type="similarity">
    <text evidence="5">In the C-terminal section; belongs to the protein kinase superfamily. Ser/Thr protein kinase family.</text>
</comment>
<comment type="similarity">
    <text evidence="5">In the N-terminal section; belongs to the leguminous lectin family.</text>
</comment>
<organism>
    <name type="scientific">Arabidopsis thaliana</name>
    <name type="common">Mouse-ear cress</name>
    <dbReference type="NCBI Taxonomy" id="3702"/>
    <lineage>
        <taxon>Eukaryota</taxon>
        <taxon>Viridiplantae</taxon>
        <taxon>Streptophyta</taxon>
        <taxon>Embryophyta</taxon>
        <taxon>Tracheophyta</taxon>
        <taxon>Spermatophyta</taxon>
        <taxon>Magnoliopsida</taxon>
        <taxon>eudicotyledons</taxon>
        <taxon>Gunneridae</taxon>
        <taxon>Pentapetalae</taxon>
        <taxon>rosids</taxon>
        <taxon>malvids</taxon>
        <taxon>Brassicales</taxon>
        <taxon>Brassicaceae</taxon>
        <taxon>Camelineae</taxon>
        <taxon>Arabidopsis</taxon>
    </lineage>
</organism>
<dbReference type="EC" id="2.7.11.1"/>
<dbReference type="EMBL" id="AB016890">
    <property type="protein sequence ID" value="BAB09771.1"/>
    <property type="molecule type" value="Genomic_DNA"/>
</dbReference>
<dbReference type="EMBL" id="CP002688">
    <property type="protein sequence ID" value="AED97163.1"/>
    <property type="molecule type" value="Genomic_DNA"/>
</dbReference>
<dbReference type="RefSeq" id="NP_200734.1">
    <property type="nucleotide sequence ID" value="NM_125316.2"/>
</dbReference>
<dbReference type="SMR" id="Q9FIF1"/>
<dbReference type="BioGRID" id="21288">
    <property type="interactions" value="9"/>
</dbReference>
<dbReference type="FunCoup" id="Q9FIF1">
    <property type="interactions" value="3"/>
</dbReference>
<dbReference type="IntAct" id="Q9FIF1">
    <property type="interactions" value="9"/>
</dbReference>
<dbReference type="GlyCosmos" id="Q9FIF1">
    <property type="glycosylation" value="6 sites, No reported glycans"/>
</dbReference>
<dbReference type="GlyGen" id="Q9FIF1">
    <property type="glycosylation" value="6 sites"/>
</dbReference>
<dbReference type="PaxDb" id="3702-AT5G59260.1"/>
<dbReference type="ProteomicsDB" id="238393"/>
<dbReference type="EnsemblPlants" id="AT5G59260.1">
    <property type="protein sequence ID" value="AT5G59260.1"/>
    <property type="gene ID" value="AT5G59260"/>
</dbReference>
<dbReference type="GeneID" id="836044"/>
<dbReference type="Gramene" id="AT5G59260.1">
    <property type="protein sequence ID" value="AT5G59260.1"/>
    <property type="gene ID" value="AT5G59260"/>
</dbReference>
<dbReference type="KEGG" id="ath:AT5G59260"/>
<dbReference type="Araport" id="AT5G59260"/>
<dbReference type="TAIR" id="AT5G59260">
    <property type="gene designation" value="LECRK-II.1"/>
</dbReference>
<dbReference type="eggNOG" id="ENOG502QSJ4">
    <property type="taxonomic scope" value="Eukaryota"/>
</dbReference>
<dbReference type="HOGENOM" id="CLU_000288_62_3_1"/>
<dbReference type="InParanoid" id="Q9FIF1"/>
<dbReference type="OMA" id="FNKTMFV"/>
<dbReference type="PhylomeDB" id="Q9FIF1"/>
<dbReference type="PRO" id="PR:Q9FIF1"/>
<dbReference type="Proteomes" id="UP000006548">
    <property type="component" value="Chromosome 5"/>
</dbReference>
<dbReference type="ExpressionAtlas" id="Q9FIF1">
    <property type="expression patterns" value="baseline and differential"/>
</dbReference>
<dbReference type="GO" id="GO:0005886">
    <property type="term" value="C:plasma membrane"/>
    <property type="evidence" value="ECO:0000250"/>
    <property type="project" value="UniProtKB"/>
</dbReference>
<dbReference type="GO" id="GO:0005524">
    <property type="term" value="F:ATP binding"/>
    <property type="evidence" value="ECO:0007669"/>
    <property type="project" value="UniProtKB-KW"/>
</dbReference>
<dbReference type="GO" id="GO:0030246">
    <property type="term" value="F:carbohydrate binding"/>
    <property type="evidence" value="ECO:0007669"/>
    <property type="project" value="UniProtKB-KW"/>
</dbReference>
<dbReference type="GO" id="GO:0106310">
    <property type="term" value="F:protein serine kinase activity"/>
    <property type="evidence" value="ECO:0007669"/>
    <property type="project" value="RHEA"/>
</dbReference>
<dbReference type="GO" id="GO:0004674">
    <property type="term" value="F:protein serine/threonine kinase activity"/>
    <property type="evidence" value="ECO:0007669"/>
    <property type="project" value="UniProtKB-KW"/>
</dbReference>
<dbReference type="CDD" id="cd06899">
    <property type="entry name" value="lectin_legume_LecRK_Arcelin_ConA"/>
    <property type="match status" value="1"/>
</dbReference>
<dbReference type="CDD" id="cd14066">
    <property type="entry name" value="STKc_IRAK"/>
    <property type="match status" value="1"/>
</dbReference>
<dbReference type="FunFam" id="3.30.200.20:FF:000451">
    <property type="entry name" value="L-type lectin-domain containing receptor kinase I.9"/>
    <property type="match status" value="1"/>
</dbReference>
<dbReference type="FunFam" id="1.10.510.10:FF:000108">
    <property type="entry name" value="L-type lectin-domain containing receptor kinase S.4"/>
    <property type="match status" value="1"/>
</dbReference>
<dbReference type="FunFam" id="2.60.120.200:FF:000096">
    <property type="entry name" value="L-type lectin-domain containing receptor kinase V.9"/>
    <property type="match status" value="1"/>
</dbReference>
<dbReference type="Gene3D" id="2.60.120.200">
    <property type="match status" value="1"/>
</dbReference>
<dbReference type="Gene3D" id="3.30.200.20">
    <property type="entry name" value="Phosphorylase Kinase, domain 1"/>
    <property type="match status" value="1"/>
</dbReference>
<dbReference type="Gene3D" id="1.10.510.10">
    <property type="entry name" value="Transferase(Phosphotransferase) domain 1"/>
    <property type="match status" value="1"/>
</dbReference>
<dbReference type="InterPro" id="IPR013320">
    <property type="entry name" value="ConA-like_dom_sf"/>
</dbReference>
<dbReference type="InterPro" id="IPR011009">
    <property type="entry name" value="Kinase-like_dom_sf"/>
</dbReference>
<dbReference type="InterPro" id="IPR050528">
    <property type="entry name" value="L-type_Lectin-RKs"/>
</dbReference>
<dbReference type="InterPro" id="IPR001220">
    <property type="entry name" value="Legume_lectin_dom"/>
</dbReference>
<dbReference type="InterPro" id="IPR000719">
    <property type="entry name" value="Prot_kinase_dom"/>
</dbReference>
<dbReference type="InterPro" id="IPR017441">
    <property type="entry name" value="Protein_kinase_ATP_BS"/>
</dbReference>
<dbReference type="InterPro" id="IPR008271">
    <property type="entry name" value="Ser/Thr_kinase_AS"/>
</dbReference>
<dbReference type="PANTHER" id="PTHR27007">
    <property type="match status" value="1"/>
</dbReference>
<dbReference type="Pfam" id="PF00139">
    <property type="entry name" value="Lectin_legB"/>
    <property type="match status" value="1"/>
</dbReference>
<dbReference type="Pfam" id="PF00069">
    <property type="entry name" value="Pkinase"/>
    <property type="match status" value="1"/>
</dbReference>
<dbReference type="SMART" id="SM00220">
    <property type="entry name" value="S_TKc"/>
    <property type="match status" value="1"/>
</dbReference>
<dbReference type="SUPFAM" id="SSF49899">
    <property type="entry name" value="Concanavalin A-like lectins/glucanases"/>
    <property type="match status" value="1"/>
</dbReference>
<dbReference type="SUPFAM" id="SSF56112">
    <property type="entry name" value="Protein kinase-like (PK-like)"/>
    <property type="match status" value="1"/>
</dbReference>
<dbReference type="PROSITE" id="PS00107">
    <property type="entry name" value="PROTEIN_KINASE_ATP"/>
    <property type="match status" value="1"/>
</dbReference>
<dbReference type="PROSITE" id="PS50011">
    <property type="entry name" value="PROTEIN_KINASE_DOM"/>
    <property type="match status" value="1"/>
</dbReference>
<dbReference type="PROSITE" id="PS00108">
    <property type="entry name" value="PROTEIN_KINASE_ST"/>
    <property type="match status" value="1"/>
</dbReference>
<reference key="1">
    <citation type="journal article" date="1998" name="DNA Res.">
        <title>Structural analysis of Arabidopsis thaliana chromosome 5. VIII. Sequence features of the regions of 1,081,958 bp covered by seventeen physically assigned P1 and TAC clones.</title>
        <authorList>
            <person name="Asamizu E."/>
            <person name="Sato S."/>
            <person name="Kaneko T."/>
            <person name="Nakamura Y."/>
            <person name="Kotani H."/>
            <person name="Miyajima N."/>
            <person name="Tabata S."/>
        </authorList>
    </citation>
    <scope>NUCLEOTIDE SEQUENCE [LARGE SCALE GENOMIC DNA]</scope>
    <source>
        <strain>cv. Columbia</strain>
    </source>
</reference>
<reference key="2">
    <citation type="journal article" date="2017" name="Plant J.">
        <title>Araport11: a complete reannotation of the Arabidopsis thaliana reference genome.</title>
        <authorList>
            <person name="Cheng C.Y."/>
            <person name="Krishnakumar V."/>
            <person name="Chan A.P."/>
            <person name="Thibaud-Nissen F."/>
            <person name="Schobel S."/>
            <person name="Town C.D."/>
        </authorList>
    </citation>
    <scope>GENOME REANNOTATION</scope>
    <source>
        <strain>cv. Columbia</strain>
    </source>
</reference>
<reference key="3">
    <citation type="journal article" date="2002" name="Crit. Rev. Plant Sci.">
        <title>Lectin receptor kinases in plants.</title>
        <authorList>
            <person name="Barre A."/>
            <person name="Herve C."/>
            <person name="Lescure B."/>
            <person name="Rouge P."/>
        </authorList>
    </citation>
    <scope>GENE FAMILY</scope>
</reference>
<reference key="4">
    <citation type="journal article" date="2009" name="J. Exp. Bot.">
        <title>Arabidopsis L-type lectin receptor kinases: phylogeny, classification, and expression profiles.</title>
        <authorList>
            <person name="Bouwmeester K."/>
            <person name="Govers F."/>
        </authorList>
    </citation>
    <scope>GENE FAMILY</scope>
    <scope>NOMENCLATURE</scope>
</reference>
<evidence type="ECO:0000250" key="1"/>
<evidence type="ECO:0000255" key="2"/>
<evidence type="ECO:0000255" key="3">
    <source>
        <dbReference type="PROSITE-ProRule" id="PRU00159"/>
    </source>
</evidence>
<evidence type="ECO:0000255" key="4">
    <source>
        <dbReference type="PROSITE-ProRule" id="PRU10027"/>
    </source>
</evidence>
<evidence type="ECO:0000305" key="5"/>
<gene>
    <name type="primary">LECRK21</name>
    <name type="ordered locus">At5g59260</name>
    <name type="ORF">MNC17.17</name>
</gene>
<accession>Q9FIF1</accession>
<protein>
    <recommendedName>
        <fullName>Probable L-type lectin-domain containing receptor kinase II.1</fullName>
        <shortName>LecRK-II.1</shortName>
        <ecNumber>2.7.11.1</ecNumber>
    </recommendedName>
</protein>
<keyword id="KW-0067">ATP-binding</keyword>
<keyword id="KW-1003">Cell membrane</keyword>
<keyword id="KW-0325">Glycoprotein</keyword>
<keyword id="KW-0418">Kinase</keyword>
<keyword id="KW-0430">Lectin</keyword>
<keyword id="KW-0472">Membrane</keyword>
<keyword id="KW-0547">Nucleotide-binding</keyword>
<keyword id="KW-0675">Receptor</keyword>
<keyword id="KW-1185">Reference proteome</keyword>
<keyword id="KW-0723">Serine/threonine-protein kinase</keyword>
<keyword id="KW-0732">Signal</keyword>
<keyword id="KW-0808">Transferase</keyword>
<keyword id="KW-0812">Transmembrane</keyword>
<keyword id="KW-1133">Transmembrane helix</keyword>
<feature type="signal peptide" evidence="2">
    <location>
        <begin position="1"/>
        <end position="24"/>
    </location>
</feature>
<feature type="chain" id="PRO_0000403081" description="Probable L-type lectin-domain containing receptor kinase II.1">
    <location>
        <begin position="25"/>
        <end position="674"/>
    </location>
</feature>
<feature type="topological domain" description="Extracellular" evidence="2">
    <location>
        <begin position="25"/>
        <end position="301"/>
    </location>
</feature>
<feature type="transmembrane region" description="Helical" evidence="2">
    <location>
        <begin position="302"/>
        <end position="322"/>
    </location>
</feature>
<feature type="topological domain" description="Cytoplasmic" evidence="2">
    <location>
        <begin position="323"/>
        <end position="674"/>
    </location>
</feature>
<feature type="domain" description="Protein kinase" evidence="3">
    <location>
        <begin position="355"/>
        <end position="633"/>
    </location>
</feature>
<feature type="region of interest" description="Legume-lectin like">
    <location>
        <begin position="28"/>
        <end position="274"/>
    </location>
</feature>
<feature type="active site" description="Proton acceptor" evidence="3 4">
    <location>
        <position position="480"/>
    </location>
</feature>
<feature type="binding site" evidence="3">
    <location>
        <begin position="361"/>
        <end position="369"/>
    </location>
    <ligand>
        <name>ATP</name>
        <dbReference type="ChEBI" id="CHEBI:30616"/>
    </ligand>
</feature>
<feature type="binding site" evidence="3">
    <location>
        <position position="383"/>
    </location>
    <ligand>
        <name>ATP</name>
        <dbReference type="ChEBI" id="CHEBI:30616"/>
    </ligand>
</feature>
<feature type="glycosylation site" description="N-linked (GlcNAc...) asparagine" evidence="2">
    <location>
        <position position="57"/>
    </location>
</feature>
<feature type="glycosylation site" description="N-linked (GlcNAc...) asparagine" evidence="2">
    <location>
        <position position="117"/>
    </location>
</feature>
<feature type="glycosylation site" description="N-linked (GlcNAc...) asparagine" evidence="2">
    <location>
        <position position="133"/>
    </location>
</feature>
<feature type="glycosylation site" description="N-linked (GlcNAc...) asparagine" evidence="2">
    <location>
        <position position="185"/>
    </location>
</feature>
<feature type="glycosylation site" description="N-linked (GlcNAc...) asparagine" evidence="2">
    <location>
        <position position="210"/>
    </location>
</feature>
<feature type="glycosylation site" description="N-linked (GlcNAc...) asparagine" evidence="2">
    <location>
        <position position="242"/>
    </location>
</feature>
<sequence>MAGVLGSVVFWLIIGIHVTFLVFAQEGDHFVYYDFRNADLELDGMANTNHGPLHLTNNTNTGTGHAFYNIPIKFTASSLSSFSFSTEFVFAIFPLQKSTYGHGMAFVVSPTKDLRSNGSANSNLGIFNRANDNKTATHIFAVELDTNQNSESFDKGGNDVGIDINSIVSVESADASYFNARKGKNISLPLASGKSILVWIDYDGIEKVLNVTLAPVQTPKPDSPYFSSFIKPKVPLLSRSINLSEIFTETMYVGFSGSTGSIKSNQYILGWSFKQGGKAESLDISRLSNPPPSPKRFPLKEVLGATISTIAFLTLGGIVYLYKKKKYAEVLEQWEKEYSPQRYSFRILYKATKGFRENQLLGAGGFGKVYKGILPSGTQIAVKRVYHDAEQGMKQYVAEIASMGRLRHKNLVHLLGYCRRKGELLLVYDYMPNGSLDDYLFHKNKLKDLTWSQRVNIIKGVASALLYLHEEWEQVVLHRDIKASNILLDADLNGKLGDFGLARFHDRGVNLEATRVVGTIGYMAPELTAMGVTTTCTDVYAFGAFILEVVCGRRPVDPDAPREQVILVKWVASCGKRDALTDTVDSKLIDFKVEEAKLLLKLGMLCSQINPENRPSMRQILQYLEGNVSVPAISFGTVALGIPNISHETVTQMTTTSSSANFSFEDVTVLFGGR</sequence>